<keyword id="KW-0012">Acyltransferase</keyword>
<keyword id="KW-0998">Cell outer membrane</keyword>
<keyword id="KW-0472">Membrane</keyword>
<keyword id="KW-1185">Reference proteome</keyword>
<keyword id="KW-0732">Signal</keyword>
<keyword id="KW-0808">Transferase</keyword>
<proteinExistence type="evidence at transcript level"/>
<name>PAGP_PHOLL</name>
<dbReference type="EC" id="2.3.1.251" evidence="1"/>
<dbReference type="EMBL" id="BX571868">
    <property type="protein sequence ID" value="CAE15158.1"/>
    <property type="molecule type" value="Genomic_DNA"/>
</dbReference>
<dbReference type="RefSeq" id="WP_011147004.1">
    <property type="nucleotide sequence ID" value="NC_005126.1"/>
</dbReference>
<dbReference type="SMR" id="Q7N3D3"/>
<dbReference type="STRING" id="243265.plu2784"/>
<dbReference type="GeneID" id="48849047"/>
<dbReference type="KEGG" id="plu:plu2784"/>
<dbReference type="eggNOG" id="ENOG502Z7SY">
    <property type="taxonomic scope" value="Bacteria"/>
</dbReference>
<dbReference type="HOGENOM" id="CLU_104099_0_0_6"/>
<dbReference type="OrthoDB" id="9156803at2"/>
<dbReference type="Proteomes" id="UP000002514">
    <property type="component" value="Chromosome"/>
</dbReference>
<dbReference type="GO" id="GO:0009279">
    <property type="term" value="C:cell outer membrane"/>
    <property type="evidence" value="ECO:0000250"/>
    <property type="project" value="UniProtKB"/>
</dbReference>
<dbReference type="GO" id="GO:0016416">
    <property type="term" value="F:O-palmitoyltransferase activity"/>
    <property type="evidence" value="ECO:0000250"/>
    <property type="project" value="UniProtKB"/>
</dbReference>
<dbReference type="GO" id="GO:0009245">
    <property type="term" value="P:lipid A biosynthetic process"/>
    <property type="evidence" value="ECO:0000250"/>
    <property type="project" value="UniProtKB"/>
</dbReference>
<dbReference type="FunFam" id="2.40.160.20:FF:000002">
    <property type="entry name" value="Lipid A palmitoyltransferase PagP"/>
    <property type="match status" value="1"/>
</dbReference>
<dbReference type="Gene3D" id="2.40.160.20">
    <property type="match status" value="1"/>
</dbReference>
<dbReference type="HAMAP" id="MF_00837">
    <property type="entry name" value="PagP_transferase"/>
    <property type="match status" value="1"/>
</dbReference>
<dbReference type="InterPro" id="IPR009746">
    <property type="entry name" value="LipidA_acyl_PagP"/>
</dbReference>
<dbReference type="InterPro" id="IPR011250">
    <property type="entry name" value="OMP/PagP_b-brl"/>
</dbReference>
<dbReference type="NCBIfam" id="NF008271">
    <property type="entry name" value="PRK11045.1"/>
    <property type="match status" value="1"/>
</dbReference>
<dbReference type="Pfam" id="PF07017">
    <property type="entry name" value="PagP"/>
    <property type="match status" value="1"/>
</dbReference>
<dbReference type="SUPFAM" id="SSF56925">
    <property type="entry name" value="OMPA-like"/>
    <property type="match status" value="1"/>
</dbReference>
<comment type="function">
    <text evidence="1">Transfers a fatty acid residue from the sn-1 position of a phospholipid to the N-linked hydroxyfatty acid chain on the proximal unit of lipid A or its precursors.</text>
</comment>
<comment type="catalytic activity">
    <reaction evidence="1">
        <text>a lipid A + a 1,2-diacyl-sn-glycero-3-phosphocholine = a hepta-acyl lipid A + a 2-acyl-sn-glycero-3-phosphocholine</text>
        <dbReference type="Rhea" id="RHEA:74275"/>
        <dbReference type="ChEBI" id="CHEBI:57643"/>
        <dbReference type="ChEBI" id="CHEBI:57875"/>
        <dbReference type="ChEBI" id="CHEBI:193141"/>
        <dbReference type="ChEBI" id="CHEBI:193142"/>
        <dbReference type="EC" id="2.3.1.251"/>
    </reaction>
</comment>
<comment type="catalytic activity">
    <reaction evidence="1">
        <text>a lipid IVA + a 1,2-diacyl-sn-glycero-3-phosphocholine = a lipid IVB + a 2-acyl-sn-glycero-3-phosphocholine</text>
        <dbReference type="Rhea" id="RHEA:74279"/>
        <dbReference type="ChEBI" id="CHEBI:57643"/>
        <dbReference type="ChEBI" id="CHEBI:57875"/>
        <dbReference type="ChEBI" id="CHEBI:176425"/>
        <dbReference type="ChEBI" id="CHEBI:193143"/>
        <dbReference type="EC" id="2.3.1.251"/>
    </reaction>
</comment>
<comment type="catalytic activity">
    <reaction evidence="1">
        <text>a lipid IIA + a 1,2-diacyl-sn-glycero-3-phosphocholine = a lipid IIB + a 2-acyl-sn-glycero-3-phosphocholine</text>
        <dbReference type="Rhea" id="RHEA:74283"/>
        <dbReference type="ChEBI" id="CHEBI:57643"/>
        <dbReference type="ChEBI" id="CHEBI:57875"/>
        <dbReference type="ChEBI" id="CHEBI:193144"/>
        <dbReference type="ChEBI" id="CHEBI:193145"/>
        <dbReference type="EC" id="2.3.1.251"/>
    </reaction>
</comment>
<comment type="subunit">
    <text evidence="1">Homodimer.</text>
</comment>
<comment type="subcellular location">
    <subcellularLocation>
        <location evidence="1">Cell outer membrane</location>
    </subcellularLocation>
</comment>
<comment type="induction">
    <text evidence="2">Induced during magnesium-deficient conditions.</text>
</comment>
<comment type="similarity">
    <text evidence="1 3">Belongs to the lipid A palmitoyltransferase family.</text>
</comment>
<evidence type="ECO:0000255" key="1">
    <source>
        <dbReference type="HAMAP-Rule" id="MF_00837"/>
    </source>
</evidence>
<evidence type="ECO:0000269" key="2">
    <source>
    </source>
</evidence>
<evidence type="ECO:0000305" key="3"/>
<protein>
    <recommendedName>
        <fullName evidence="1">Lipid A acyltransferase PagP</fullName>
        <ecNumber evidence="1">2.3.1.251</ecNumber>
    </recommendedName>
    <alternativeName>
        <fullName evidence="1">Lipid A acylation protein</fullName>
    </alternativeName>
</protein>
<accession>Q7N3D3</accession>
<reference key="1">
    <citation type="journal article" date="2003" name="Nat. Biotechnol.">
        <title>The genome sequence of the entomopathogenic bacterium Photorhabdus luminescens.</title>
        <authorList>
            <person name="Duchaud E."/>
            <person name="Rusniok C."/>
            <person name="Frangeul L."/>
            <person name="Buchrieser C."/>
            <person name="Givaudan A."/>
            <person name="Taourit S."/>
            <person name="Bocs S."/>
            <person name="Boursaux-Eude C."/>
            <person name="Chandler M."/>
            <person name="Charles J.-F."/>
            <person name="Dassa E."/>
            <person name="Derose R."/>
            <person name="Derzelle S."/>
            <person name="Freyssinet G."/>
            <person name="Gaudriault S."/>
            <person name="Medigue C."/>
            <person name="Lanois A."/>
            <person name="Powell K."/>
            <person name="Siguier P."/>
            <person name="Vincent R."/>
            <person name="Wingate V."/>
            <person name="Zouine M."/>
            <person name="Glaser P."/>
            <person name="Boemare N."/>
            <person name="Danchin A."/>
            <person name="Kunst F."/>
        </authorList>
    </citation>
    <scope>NUCLEOTIDE SEQUENCE [LARGE SCALE GENOMIC DNA]</scope>
    <source>
        <strain>DSM 15139 / CIP 105565 / TT01</strain>
    </source>
</reference>
<reference key="2">
    <citation type="journal article" date="2004" name="J. Bacteriol.">
        <title>The PhoP-PhoQ two-component regulatory system of Photorhabdus luminescens is essential for virulence in insects.</title>
        <authorList>
            <person name="Derzelle S."/>
            <person name="Turlin E."/>
            <person name="Duchaud E."/>
            <person name="Pages S."/>
            <person name="Kunst F."/>
            <person name="Givaudan A."/>
            <person name="Danchin A."/>
        </authorList>
    </citation>
    <scope>INDUCTION</scope>
</reference>
<sequence length="207" mass="24004">MKFDLTAACTLSATLLVSSGTVFATTANTANKSLTTIESHTPISYGNNSSSLWEKFNNNVALTWDAPNNELYLPVITWHNRHTYDKEKTDRYNERPWGFGYGKYRYDEDNDWHSLYAMAFMDSHNRLEPIVGYGFQKMWIPGDLEGFRMGIGFTLSVTARHDYYYVPIPLPLPLFSIEYDRLSFQGTYIPGTYNNGNVLFAWLRWQW</sequence>
<organism>
    <name type="scientific">Photorhabdus laumondii subsp. laumondii (strain DSM 15139 / CIP 105565 / TT01)</name>
    <name type="common">Photorhabdus luminescens subsp. laumondii</name>
    <dbReference type="NCBI Taxonomy" id="243265"/>
    <lineage>
        <taxon>Bacteria</taxon>
        <taxon>Pseudomonadati</taxon>
        <taxon>Pseudomonadota</taxon>
        <taxon>Gammaproteobacteria</taxon>
        <taxon>Enterobacterales</taxon>
        <taxon>Morganellaceae</taxon>
        <taxon>Photorhabdus</taxon>
    </lineage>
</organism>
<gene>
    <name evidence="1" type="primary">pagP</name>
    <name type="ordered locus">plu2784</name>
</gene>
<feature type="signal peptide" evidence="1">
    <location>
        <begin position="1"/>
        <end position="24"/>
    </location>
</feature>
<feature type="chain" id="PRO_0000414468" description="Lipid A acyltransferase PagP">
    <location>
        <begin position="25"/>
        <end position="207"/>
    </location>
</feature>
<feature type="active site" evidence="1">
    <location>
        <position position="79"/>
    </location>
</feature>
<feature type="active site" evidence="1">
    <location>
        <position position="122"/>
    </location>
</feature>
<feature type="active site" evidence="1">
    <location>
        <position position="123"/>
    </location>
</feature>
<feature type="site" description="Role in lipopolysaccharide recognition" evidence="1">
    <location>
        <position position="88"/>
    </location>
</feature>
<feature type="site" description="Role in the phospholipid gating" evidence="1">
    <location>
        <position position="193"/>
    </location>
</feature>